<comment type="subcellular location">
    <subcellularLocation>
        <location evidence="3">Spore wall</location>
    </subcellularLocation>
    <text>Spore rim.</text>
</comment>
<comment type="similarity">
    <text evidence="4">Belongs to the glycosyl hydrolase 31 family.</text>
</comment>
<feature type="signal peptide" evidence="2">
    <location>
        <begin position="1"/>
        <end position="30"/>
    </location>
</feature>
<feature type="chain" id="PRO_0000018588" description="Uncharacterized family 31 glucosidase C1039.11c">
    <location>
        <begin position="31"/>
        <end position="995"/>
    </location>
</feature>
<feature type="active site" evidence="1">
    <location>
        <position position="502"/>
    </location>
</feature>
<feature type="active site" description="Proton donor" evidence="1">
    <location>
        <position position="669"/>
    </location>
</feature>
<feature type="glycosylation site" description="N-linked (GlcNAc...) asparagine" evidence="2">
    <location>
        <position position="115"/>
    </location>
</feature>
<feature type="glycosylation site" description="N-linked (GlcNAc...) asparagine" evidence="2">
    <location>
        <position position="162"/>
    </location>
</feature>
<feature type="glycosylation site" description="N-linked (GlcNAc...) asparagine" evidence="2">
    <location>
        <position position="225"/>
    </location>
</feature>
<feature type="glycosylation site" description="N-linked (GlcNAc...) asparagine" evidence="2">
    <location>
        <position position="422"/>
    </location>
</feature>
<feature type="glycosylation site" description="N-linked (GlcNAc...) asparagine" evidence="2">
    <location>
        <position position="478"/>
    </location>
</feature>
<feature type="glycosylation site" description="N-linked (GlcNAc...) asparagine" evidence="2">
    <location>
        <position position="486"/>
    </location>
</feature>
<feature type="glycosylation site" description="N-linked (GlcNAc...) asparagine" evidence="2">
    <location>
        <position position="546"/>
    </location>
</feature>
<feature type="glycosylation site" description="N-linked (GlcNAc...) asparagine" evidence="2">
    <location>
        <position position="611"/>
    </location>
</feature>
<feature type="glycosylation site" description="N-linked (GlcNAc...) asparagine" evidence="2">
    <location>
        <position position="670"/>
    </location>
</feature>
<feature type="glycosylation site" description="N-linked (GlcNAc...) asparagine" evidence="2">
    <location>
        <position position="823"/>
    </location>
</feature>
<feature type="glycosylation site" description="N-linked (GlcNAc...) asparagine" evidence="2">
    <location>
        <position position="843"/>
    </location>
</feature>
<feature type="glycosylation site" description="N-linked (GlcNAc...) asparagine" evidence="2">
    <location>
        <position position="986"/>
    </location>
</feature>
<accession>Q9URX4</accession>
<accession>Q9US31</accession>
<accession>Q9UTV8</accession>
<sequence>MFIHRMKSNLASLFLSFFLLLACEFTFSYADFSTTTSDATHPSATATEDIFSTPAVPSLGLAQNPSVYEPYRGDKCGGYNAIQVSEYEKGVLAILQLNGDPCYAYGTDYPFLALNVSFDSIDRLHVSIQDLYGAQFQFSKRTDVWDAPLYHFQPQFGDRTYNFSFNSQPFEFWVTRVSDGEVLFDTRGHKLIFEDQYIELTTNMVDDYNVYGLAETVHGLRLGNNLTRTFWANGNPTPLDRNAYGTHPFYLEHRYTPSENLNSDGQPSYTSSTHGVLMLTANGMEVLLRPNYLQYRIIGGIVDLYIYVGGTKNPKDTVSQFVQSVGTPAMQQHWTFGFHICRWGYKNVFDLVEVKENFKNFEIPVDTFWSDIDYMYEYRDFTVESNAFPKDKMMEFFNSLQQSNQHYVPIIDAAIYAANPINRSDDVYYPYYEGVRRDIFLRNPDRSLYVGNVWPGFTTFPDFTNPETTNYWTECLMNLSAAFGYNSSFPLPYSGLWIDMNEPTSFCIGSCGTDKLDQNPVHPAFILEGEPNNMVYMYPEGFEHTNASEHASAYQASVSQYYATATSTVESVKATSTPLNVRPKYNINYPPYALNTEQGEGDLSNLGVSVNATYHDGTVRYNLFNTYGYDQSRVTYDSLTSIEPNVRPFILSRSTFVGSGKYAAHWLGDNYSLWSNMIFSIPGALTFNMVGLPMVGADVCGFMGNTDEELCSRWMALGAFLPFYRNHNSLGSISQEPYRWESVAESSRCAMNIRYSLLPYWYTLMYEASSQGLPLIRPLFFEFPNEPSLANADRQFMVGSALLVTPVLEPNVDYVRGVFPGDNSTIWYDWYDHKVIYRQHNENITLSAPLTHINVAIRGGNIIPMQKPSLTTHETKQNPYDLLVALDSDRKACGSLYVDDGVSIQQESTLFVKFVANGDSLSIESYGDLQVHEPLSKITIIGLPCAPIGVYFEGVQVESFSYLEDTKELVLTNLEAFTSTGAFSNNWTISWNLPV</sequence>
<dbReference type="EC" id="3.2.1.-"/>
<dbReference type="EMBL" id="CU329670">
    <property type="protein sequence ID" value="CAB63547.2"/>
    <property type="molecule type" value="Genomic_DNA"/>
</dbReference>
<dbReference type="EMBL" id="AB027968">
    <property type="protein sequence ID" value="BAA87272.1"/>
    <property type="molecule type" value="Genomic_DNA"/>
</dbReference>
<dbReference type="PIR" id="T50061">
    <property type="entry name" value="T50061"/>
</dbReference>
<dbReference type="PIR" id="T50267">
    <property type="entry name" value="T50267"/>
</dbReference>
<dbReference type="RefSeq" id="XP_001713119.1">
    <property type="nucleotide sequence ID" value="XM_001713067.2"/>
</dbReference>
<dbReference type="SMR" id="Q9URX4"/>
<dbReference type="FunCoup" id="Q9URX4">
    <property type="interactions" value="53"/>
</dbReference>
<dbReference type="STRING" id="284812.Q9URX4"/>
<dbReference type="CAZy" id="GH31">
    <property type="family name" value="Glycoside Hydrolase Family 31"/>
</dbReference>
<dbReference type="PaxDb" id="4896-SPAC1039.11c.1"/>
<dbReference type="EnsemblFungi" id="SPAC1039.11c.1">
    <property type="protein sequence ID" value="SPAC1039.11c.1:pep"/>
    <property type="gene ID" value="SPAC1039.11c"/>
</dbReference>
<dbReference type="PomBase" id="SPAC1039.11c"/>
<dbReference type="VEuPathDB" id="FungiDB:SPAC1039.11c"/>
<dbReference type="eggNOG" id="KOG1065">
    <property type="taxonomic scope" value="Eukaryota"/>
</dbReference>
<dbReference type="HOGENOM" id="CLU_000631_11_0_1"/>
<dbReference type="InParanoid" id="Q9URX4"/>
<dbReference type="OMA" id="MVGADAC"/>
<dbReference type="PhylomeDB" id="Q9URX4"/>
<dbReference type="Reactome" id="R-SPO-189085">
    <property type="pathway name" value="Digestion of dietary carbohydrate"/>
</dbReference>
<dbReference type="Reactome" id="R-SPO-6798695">
    <property type="pathway name" value="Neutrophil degranulation"/>
</dbReference>
<dbReference type="Reactome" id="R-SPO-70221">
    <property type="pathway name" value="Glycogen breakdown (glycogenolysis)"/>
</dbReference>
<dbReference type="PRO" id="PR:Q9URX4"/>
<dbReference type="Proteomes" id="UP000002485">
    <property type="component" value="Chromosome I"/>
</dbReference>
<dbReference type="GO" id="GO:0005783">
    <property type="term" value="C:endoplasmic reticulum"/>
    <property type="evidence" value="ECO:0007005"/>
    <property type="project" value="PomBase"/>
</dbReference>
<dbReference type="GO" id="GO:0031160">
    <property type="term" value="C:spore wall"/>
    <property type="evidence" value="ECO:0007669"/>
    <property type="project" value="UniProtKB-SubCell"/>
</dbReference>
<dbReference type="GO" id="GO:0090599">
    <property type="term" value="F:alpha-glucosidase activity"/>
    <property type="evidence" value="ECO:0000255"/>
    <property type="project" value="PomBase"/>
</dbReference>
<dbReference type="GO" id="GO:0030246">
    <property type="term" value="F:carbohydrate binding"/>
    <property type="evidence" value="ECO:0007669"/>
    <property type="project" value="InterPro"/>
</dbReference>
<dbReference type="GO" id="GO:0004553">
    <property type="term" value="F:hydrolase activity, hydrolyzing O-glycosyl compounds"/>
    <property type="evidence" value="ECO:0000318"/>
    <property type="project" value="GO_Central"/>
</dbReference>
<dbReference type="GO" id="GO:0016052">
    <property type="term" value="P:carbohydrate catabolic process"/>
    <property type="evidence" value="ECO:0000305"/>
    <property type="project" value="PomBase"/>
</dbReference>
<dbReference type="CDD" id="cd06602">
    <property type="entry name" value="GH31_MGAM_SI_GAA"/>
    <property type="match status" value="1"/>
</dbReference>
<dbReference type="CDD" id="cd14752">
    <property type="entry name" value="GH31_N"/>
    <property type="match status" value="1"/>
</dbReference>
<dbReference type="FunFam" id="2.60.40.1180:FF:000001">
    <property type="entry name" value="Maltase-glucoamylase, intestinal"/>
    <property type="match status" value="1"/>
</dbReference>
<dbReference type="FunFam" id="2.60.40.1760:FF:000005">
    <property type="entry name" value="Putative alpha-glucosidase AgdA"/>
    <property type="match status" value="1"/>
</dbReference>
<dbReference type="FunFam" id="3.20.20.80:FF:000138">
    <property type="entry name" value="Putative alpha-glucosidase AgdA"/>
    <property type="match status" value="1"/>
</dbReference>
<dbReference type="FunFam" id="3.20.20.80:FF:000169">
    <property type="entry name" value="Putative alpha-glucosidase AgdA"/>
    <property type="match status" value="1"/>
</dbReference>
<dbReference type="Gene3D" id="3.20.20.80">
    <property type="entry name" value="Glycosidases"/>
    <property type="match status" value="2"/>
</dbReference>
<dbReference type="Gene3D" id="2.60.40.1760">
    <property type="entry name" value="glycosyl hydrolase (family 31)"/>
    <property type="match status" value="1"/>
</dbReference>
<dbReference type="Gene3D" id="2.60.40.1180">
    <property type="entry name" value="Golgi alpha-mannosidase II"/>
    <property type="match status" value="2"/>
</dbReference>
<dbReference type="InterPro" id="IPR011013">
    <property type="entry name" value="Gal_mutarotase_sf_dom"/>
</dbReference>
<dbReference type="InterPro" id="IPR030458">
    <property type="entry name" value="Glyco_hydro_31_AS"/>
</dbReference>
<dbReference type="InterPro" id="IPR048395">
    <property type="entry name" value="Glyco_hydro_31_C"/>
</dbReference>
<dbReference type="InterPro" id="IPR030459">
    <property type="entry name" value="Glyco_hydro_31_CS"/>
</dbReference>
<dbReference type="InterPro" id="IPR000322">
    <property type="entry name" value="Glyco_hydro_31_TIM"/>
</dbReference>
<dbReference type="InterPro" id="IPR013780">
    <property type="entry name" value="Glyco_hydro_b"/>
</dbReference>
<dbReference type="InterPro" id="IPR017853">
    <property type="entry name" value="Glycoside_hydrolase_SF"/>
</dbReference>
<dbReference type="PANTHER" id="PTHR22762">
    <property type="entry name" value="ALPHA-GLUCOSIDASE"/>
    <property type="match status" value="1"/>
</dbReference>
<dbReference type="PANTHER" id="PTHR22762:SF133">
    <property type="entry name" value="P-TYPE DOMAIN-CONTAINING PROTEIN"/>
    <property type="match status" value="1"/>
</dbReference>
<dbReference type="Pfam" id="PF01055">
    <property type="entry name" value="Glyco_hydro_31_2nd"/>
    <property type="match status" value="1"/>
</dbReference>
<dbReference type="Pfam" id="PF21365">
    <property type="entry name" value="Glyco_hydro_31_3rd"/>
    <property type="match status" value="1"/>
</dbReference>
<dbReference type="SUPFAM" id="SSF51445">
    <property type="entry name" value="(Trans)glycosidases"/>
    <property type="match status" value="1"/>
</dbReference>
<dbReference type="SUPFAM" id="SSF74650">
    <property type="entry name" value="Galactose mutarotase-like"/>
    <property type="match status" value="1"/>
</dbReference>
<dbReference type="SUPFAM" id="SSF51011">
    <property type="entry name" value="Glycosyl hydrolase domain"/>
    <property type="match status" value="1"/>
</dbReference>
<dbReference type="PROSITE" id="PS00129">
    <property type="entry name" value="GLYCOSYL_HYDROL_F31_1"/>
    <property type="match status" value="1"/>
</dbReference>
<dbReference type="PROSITE" id="PS00707">
    <property type="entry name" value="GLYCOSYL_HYDROL_F31_2"/>
    <property type="match status" value="1"/>
</dbReference>
<keyword id="KW-0325">Glycoprotein</keyword>
<keyword id="KW-0326">Glycosidase</keyword>
<keyword id="KW-0378">Hydrolase</keyword>
<keyword id="KW-1185">Reference proteome</keyword>
<keyword id="KW-0732">Signal</keyword>
<proteinExistence type="inferred from homology"/>
<protein>
    <recommendedName>
        <fullName>Uncharacterized family 31 glucosidase C1039.11c</fullName>
        <ecNumber>3.2.1.-</ecNumber>
    </recommendedName>
</protein>
<name>YFZB_SCHPO</name>
<reference key="1">
    <citation type="journal article" date="2002" name="Nature">
        <title>The genome sequence of Schizosaccharomyces pombe.</title>
        <authorList>
            <person name="Wood V."/>
            <person name="Gwilliam R."/>
            <person name="Rajandream M.A."/>
            <person name="Lyne M.H."/>
            <person name="Lyne R."/>
            <person name="Stewart A."/>
            <person name="Sgouros J.G."/>
            <person name="Peat N."/>
            <person name="Hayles J."/>
            <person name="Baker S.G."/>
            <person name="Basham D."/>
            <person name="Bowman S."/>
            <person name="Brooks K."/>
            <person name="Brown D."/>
            <person name="Brown S."/>
            <person name="Chillingworth T."/>
            <person name="Churcher C.M."/>
            <person name="Collins M."/>
            <person name="Connor R."/>
            <person name="Cronin A."/>
            <person name="Davis P."/>
            <person name="Feltwell T."/>
            <person name="Fraser A."/>
            <person name="Gentles S."/>
            <person name="Goble A."/>
            <person name="Hamlin N."/>
            <person name="Harris D.E."/>
            <person name="Hidalgo J."/>
            <person name="Hodgson G."/>
            <person name="Holroyd S."/>
            <person name="Hornsby T."/>
            <person name="Howarth S."/>
            <person name="Huckle E.J."/>
            <person name="Hunt S."/>
            <person name="Jagels K."/>
            <person name="James K.D."/>
            <person name="Jones L."/>
            <person name="Jones M."/>
            <person name="Leather S."/>
            <person name="McDonald S."/>
            <person name="McLean J."/>
            <person name="Mooney P."/>
            <person name="Moule S."/>
            <person name="Mungall K.L."/>
            <person name="Murphy L.D."/>
            <person name="Niblett D."/>
            <person name="Odell C."/>
            <person name="Oliver K."/>
            <person name="O'Neil S."/>
            <person name="Pearson D."/>
            <person name="Quail M.A."/>
            <person name="Rabbinowitsch E."/>
            <person name="Rutherford K.M."/>
            <person name="Rutter S."/>
            <person name="Saunders D."/>
            <person name="Seeger K."/>
            <person name="Sharp S."/>
            <person name="Skelton J."/>
            <person name="Simmonds M.N."/>
            <person name="Squares R."/>
            <person name="Squares S."/>
            <person name="Stevens K."/>
            <person name="Taylor K."/>
            <person name="Taylor R.G."/>
            <person name="Tivey A."/>
            <person name="Walsh S.V."/>
            <person name="Warren T."/>
            <person name="Whitehead S."/>
            <person name="Woodward J.R."/>
            <person name="Volckaert G."/>
            <person name="Aert R."/>
            <person name="Robben J."/>
            <person name="Grymonprez B."/>
            <person name="Weltjens I."/>
            <person name="Vanstreels E."/>
            <person name="Rieger M."/>
            <person name="Schaefer M."/>
            <person name="Mueller-Auer S."/>
            <person name="Gabel C."/>
            <person name="Fuchs M."/>
            <person name="Duesterhoeft A."/>
            <person name="Fritzc C."/>
            <person name="Holzer E."/>
            <person name="Moestl D."/>
            <person name="Hilbert H."/>
            <person name="Borzym K."/>
            <person name="Langer I."/>
            <person name="Beck A."/>
            <person name="Lehrach H."/>
            <person name="Reinhardt R."/>
            <person name="Pohl T.M."/>
            <person name="Eger P."/>
            <person name="Zimmermann W."/>
            <person name="Wedler H."/>
            <person name="Wambutt R."/>
            <person name="Purnelle B."/>
            <person name="Goffeau A."/>
            <person name="Cadieu E."/>
            <person name="Dreano S."/>
            <person name="Gloux S."/>
            <person name="Lelaure V."/>
            <person name="Mottier S."/>
            <person name="Galibert F."/>
            <person name="Aves S.J."/>
            <person name="Xiang Z."/>
            <person name="Hunt C."/>
            <person name="Moore K."/>
            <person name="Hurst S.M."/>
            <person name="Lucas M."/>
            <person name="Rochet M."/>
            <person name="Gaillardin C."/>
            <person name="Tallada V.A."/>
            <person name="Garzon A."/>
            <person name="Thode G."/>
            <person name="Daga R.R."/>
            <person name="Cruzado L."/>
            <person name="Jimenez J."/>
            <person name="Sanchez M."/>
            <person name="del Rey F."/>
            <person name="Benito J."/>
            <person name="Dominguez A."/>
            <person name="Revuelta J.L."/>
            <person name="Moreno S."/>
            <person name="Armstrong J."/>
            <person name="Forsburg S.L."/>
            <person name="Cerutti L."/>
            <person name="Lowe T."/>
            <person name="McCombie W.R."/>
            <person name="Paulsen I."/>
            <person name="Potashkin J."/>
            <person name="Shpakovski G.V."/>
            <person name="Ussery D."/>
            <person name="Barrell B.G."/>
            <person name="Nurse P."/>
        </authorList>
    </citation>
    <scope>NUCLEOTIDE SEQUENCE [LARGE SCALE GENOMIC DNA]</scope>
    <source>
        <strain>972 / ATCC 24843</strain>
    </source>
</reference>
<reference key="2">
    <citation type="journal article" date="2000" name="Genes Cells">
        <title>Large-scale screening of intracellular protein localization in living fission yeast cells by the use of a GFP-fusion genomic DNA library.</title>
        <authorList>
            <person name="Ding D.-Q."/>
            <person name="Tomita Y."/>
            <person name="Yamamoto A."/>
            <person name="Chikashige Y."/>
            <person name="Haraguchi T."/>
            <person name="Hiraoka Y."/>
        </authorList>
    </citation>
    <scope>NUCLEOTIDE SEQUENCE [LARGE SCALE GENOMIC DNA] OF 1-100</scope>
    <scope>SUBCELLULAR LOCATION</scope>
    <source>
        <strain>ATCC 38364 / 968</strain>
    </source>
</reference>
<gene>
    <name type="ORF">SPAC1039.11c</name>
    <name type="ORF">SPAC922.02c</name>
</gene>
<evidence type="ECO:0000250" key="1"/>
<evidence type="ECO:0000255" key="2"/>
<evidence type="ECO:0000269" key="3">
    <source>
    </source>
</evidence>
<evidence type="ECO:0000305" key="4"/>
<organism>
    <name type="scientific">Schizosaccharomyces pombe (strain 972 / ATCC 24843)</name>
    <name type="common">Fission yeast</name>
    <dbReference type="NCBI Taxonomy" id="284812"/>
    <lineage>
        <taxon>Eukaryota</taxon>
        <taxon>Fungi</taxon>
        <taxon>Dikarya</taxon>
        <taxon>Ascomycota</taxon>
        <taxon>Taphrinomycotina</taxon>
        <taxon>Schizosaccharomycetes</taxon>
        <taxon>Schizosaccharomycetales</taxon>
        <taxon>Schizosaccharomycetaceae</taxon>
        <taxon>Schizosaccharomyces</taxon>
    </lineage>
</organism>